<keyword id="KW-0963">Cytoplasm</keyword>
<keyword id="KW-0378">Hydrolase</keyword>
<comment type="function">
    <text evidence="1">The natural substrate for this enzyme may be peptidyl-tRNAs which drop off the ribosome during protein synthesis.</text>
</comment>
<comment type="catalytic activity">
    <reaction evidence="1">
        <text>an N-acyl-L-alpha-aminoacyl-tRNA + H2O = an N-acyl-L-amino acid + a tRNA + H(+)</text>
        <dbReference type="Rhea" id="RHEA:54448"/>
        <dbReference type="Rhea" id="RHEA-COMP:10123"/>
        <dbReference type="Rhea" id="RHEA-COMP:13883"/>
        <dbReference type="ChEBI" id="CHEBI:15377"/>
        <dbReference type="ChEBI" id="CHEBI:15378"/>
        <dbReference type="ChEBI" id="CHEBI:59874"/>
        <dbReference type="ChEBI" id="CHEBI:78442"/>
        <dbReference type="ChEBI" id="CHEBI:138191"/>
        <dbReference type="EC" id="3.1.1.29"/>
    </reaction>
</comment>
<comment type="subcellular location">
    <subcellularLocation>
        <location evidence="1">Cytoplasm</location>
    </subcellularLocation>
</comment>
<comment type="similarity">
    <text evidence="1">Belongs to the PTH2 family.</text>
</comment>
<feature type="chain" id="PRO_1000051679" description="Peptidyl-tRNA hydrolase">
    <location>
        <begin position="1"/>
        <end position="116"/>
    </location>
</feature>
<sequence length="116" mass="12664">MYEQAIVIRNDLKMGKGKMAAQACHASIQAFLHAQKISSSAVSGWMNEGQKKVVLKVNSEKELLEIFKNVNIEGLPCSLIRDAGRTQVEPGSLTAVGIGPEKEEKISKVTKDLKLL</sequence>
<dbReference type="EC" id="3.1.1.29" evidence="1"/>
<dbReference type="EMBL" id="CP000745">
    <property type="protein sequence ID" value="ABR66689.1"/>
    <property type="molecule type" value="Genomic_DNA"/>
</dbReference>
<dbReference type="SMR" id="A6VJR3"/>
<dbReference type="STRING" id="426368.MmarC7_1631"/>
<dbReference type="KEGG" id="mmz:MmarC7_1631"/>
<dbReference type="eggNOG" id="arCOG04228">
    <property type="taxonomic scope" value="Archaea"/>
</dbReference>
<dbReference type="HOGENOM" id="CLU_073661_2_2_2"/>
<dbReference type="OrthoDB" id="6075at2157"/>
<dbReference type="GO" id="GO:0005829">
    <property type="term" value="C:cytosol"/>
    <property type="evidence" value="ECO:0007669"/>
    <property type="project" value="TreeGrafter"/>
</dbReference>
<dbReference type="GO" id="GO:0004045">
    <property type="term" value="F:peptidyl-tRNA hydrolase activity"/>
    <property type="evidence" value="ECO:0007669"/>
    <property type="project" value="UniProtKB-UniRule"/>
</dbReference>
<dbReference type="GO" id="GO:0006412">
    <property type="term" value="P:translation"/>
    <property type="evidence" value="ECO:0007669"/>
    <property type="project" value="UniProtKB-UniRule"/>
</dbReference>
<dbReference type="CDD" id="cd02430">
    <property type="entry name" value="PTH2"/>
    <property type="match status" value="1"/>
</dbReference>
<dbReference type="FunFam" id="3.40.1490.10:FF:000001">
    <property type="entry name" value="Peptidyl-tRNA hydrolase 2"/>
    <property type="match status" value="1"/>
</dbReference>
<dbReference type="Gene3D" id="3.40.1490.10">
    <property type="entry name" value="Bit1"/>
    <property type="match status" value="1"/>
</dbReference>
<dbReference type="HAMAP" id="MF_00628">
    <property type="entry name" value="Pept_tRNA_hydro_arch"/>
    <property type="match status" value="1"/>
</dbReference>
<dbReference type="InterPro" id="IPR023476">
    <property type="entry name" value="Pep_tRNA_hydro_II_dom_sf"/>
</dbReference>
<dbReference type="InterPro" id="IPR034759">
    <property type="entry name" value="Pept_tRNA_hydro_arch"/>
</dbReference>
<dbReference type="InterPro" id="IPR002833">
    <property type="entry name" value="PTH2"/>
</dbReference>
<dbReference type="NCBIfam" id="TIGR00283">
    <property type="entry name" value="arch_pth2"/>
    <property type="match status" value="1"/>
</dbReference>
<dbReference type="NCBIfam" id="NF003314">
    <property type="entry name" value="PRK04322.1"/>
    <property type="match status" value="1"/>
</dbReference>
<dbReference type="PANTHER" id="PTHR12649">
    <property type="entry name" value="PEPTIDYL-TRNA HYDROLASE 2"/>
    <property type="match status" value="1"/>
</dbReference>
<dbReference type="PANTHER" id="PTHR12649:SF11">
    <property type="entry name" value="PEPTIDYL-TRNA HYDROLASE 2, MITOCHONDRIAL"/>
    <property type="match status" value="1"/>
</dbReference>
<dbReference type="Pfam" id="PF01981">
    <property type="entry name" value="PTH2"/>
    <property type="match status" value="1"/>
</dbReference>
<dbReference type="SUPFAM" id="SSF102462">
    <property type="entry name" value="Peptidyl-tRNA hydrolase II"/>
    <property type="match status" value="1"/>
</dbReference>
<protein>
    <recommendedName>
        <fullName evidence="1">Peptidyl-tRNA hydrolase</fullName>
        <shortName evidence="1">PTH</shortName>
        <ecNumber evidence="1">3.1.1.29</ecNumber>
    </recommendedName>
</protein>
<evidence type="ECO:0000255" key="1">
    <source>
        <dbReference type="HAMAP-Rule" id="MF_00628"/>
    </source>
</evidence>
<gene>
    <name evidence="1" type="primary">pth</name>
    <name type="ordered locus">MmarC7_1631</name>
</gene>
<reference key="1">
    <citation type="submission" date="2007-06" db="EMBL/GenBank/DDBJ databases">
        <title>Complete sequence of Methanococcus maripaludis C7.</title>
        <authorList>
            <consortium name="US DOE Joint Genome Institute"/>
            <person name="Copeland A."/>
            <person name="Lucas S."/>
            <person name="Lapidus A."/>
            <person name="Barry K."/>
            <person name="Glavina del Rio T."/>
            <person name="Dalin E."/>
            <person name="Tice H."/>
            <person name="Pitluck S."/>
            <person name="Clum A."/>
            <person name="Schmutz J."/>
            <person name="Larimer F."/>
            <person name="Land M."/>
            <person name="Hauser L."/>
            <person name="Kyrpides N."/>
            <person name="Anderson I."/>
            <person name="Sieprawska-Lupa M."/>
            <person name="Whitman W.B."/>
            <person name="Richardson P."/>
        </authorList>
    </citation>
    <scope>NUCLEOTIDE SEQUENCE [LARGE SCALE GENOMIC DNA]</scope>
    <source>
        <strain>C7 / ATCC BAA-1331</strain>
    </source>
</reference>
<proteinExistence type="inferred from homology"/>
<name>PTH_METM7</name>
<accession>A6VJR3</accession>
<organism>
    <name type="scientific">Methanococcus maripaludis (strain C7 / ATCC BAA-1331)</name>
    <dbReference type="NCBI Taxonomy" id="426368"/>
    <lineage>
        <taxon>Archaea</taxon>
        <taxon>Methanobacteriati</taxon>
        <taxon>Methanobacteriota</taxon>
        <taxon>Methanomada group</taxon>
        <taxon>Methanococci</taxon>
        <taxon>Methanococcales</taxon>
        <taxon>Methanococcaceae</taxon>
        <taxon>Methanococcus</taxon>
    </lineage>
</organism>